<feature type="signal peptide" evidence="1">
    <location>
        <begin position="1"/>
        <end position="36"/>
    </location>
</feature>
<feature type="chain" id="PRO_0000019800" description="Early nodulin-10">
    <location>
        <begin position="37"/>
        <end position="122"/>
    </location>
</feature>
<feature type="repeat" description="1">
    <location>
        <begin position="45"/>
        <end position="49"/>
    </location>
</feature>
<feature type="repeat" description="2">
    <location>
        <begin position="51"/>
        <end position="55"/>
    </location>
</feature>
<feature type="repeat" description="3">
    <location>
        <begin position="58"/>
        <end position="62"/>
    </location>
</feature>
<feature type="repeat" description="4">
    <location>
        <begin position="68"/>
        <end position="72"/>
    </location>
</feature>
<feature type="repeat" description="5">
    <location>
        <begin position="77"/>
        <end position="81"/>
    </location>
</feature>
<feature type="repeat" description="6">
    <location>
        <begin position="82"/>
        <end position="86"/>
    </location>
</feature>
<feature type="repeat" description="7">
    <location>
        <begin position="88"/>
        <end position="92"/>
    </location>
</feature>
<feature type="repeat" description="8">
    <location>
        <begin position="99"/>
        <end position="103"/>
    </location>
</feature>
<feature type="repeat" description="9">
    <location>
        <begin position="106"/>
        <end position="110"/>
    </location>
</feature>
<feature type="repeat" description="10">
    <location>
        <begin position="113"/>
        <end position="117"/>
    </location>
</feature>
<feature type="region of interest" description="10 X 5 AA approximate repeats of P-P-X-X-X">
    <location>
        <begin position="45"/>
        <end position="117"/>
    </location>
</feature>
<feature type="region of interest" description="Disordered" evidence="2">
    <location>
        <begin position="90"/>
        <end position="122"/>
    </location>
</feature>
<reference key="1">
    <citation type="journal article" date="1993" name="Plant Physiol.">
        <title>A gene that encodes a proline-rich nodulin with limited homology to PsENOD12 is expressed in the invasion zone of Rhizobium meliloti-induced alfalfa root nodules.</title>
        <authorList>
            <person name="Loebler M."/>
            <person name="Hirsch A.M."/>
        </authorList>
    </citation>
    <scope>NUCLEOTIDE SEQUENCE [MRNA]</scope>
    <scope>TISSUE SPECIFICITY</scope>
    <scope>INDUCTION</scope>
    <source>
        <strain>cv. Iroquois</strain>
        <tissue>Root nodule</tissue>
    </source>
</reference>
<comment type="tissue specificity">
    <text evidence="3">Root nodules. In early nodules, expressed only in the interior of the developing nodule with no expression in other nodule tissues, including meristem. In slightly older nodules, expressed in almost all cells of the central zone. In more mature nodules, expression is restricted to the invasion zone.</text>
</comment>
<comment type="induction">
    <text evidence="3">Expressed from day 6 after rhizobium infection. Persists up to 43 days after infection.</text>
</comment>
<organism>
    <name type="scientific">Medicago sativa</name>
    <name type="common">Alfalfa</name>
    <dbReference type="NCBI Taxonomy" id="3879"/>
    <lineage>
        <taxon>Eukaryota</taxon>
        <taxon>Viridiplantae</taxon>
        <taxon>Streptophyta</taxon>
        <taxon>Embryophyta</taxon>
        <taxon>Tracheophyta</taxon>
        <taxon>Spermatophyta</taxon>
        <taxon>Magnoliopsida</taxon>
        <taxon>eudicotyledons</taxon>
        <taxon>Gunneridae</taxon>
        <taxon>Pentapetalae</taxon>
        <taxon>rosids</taxon>
        <taxon>fabids</taxon>
        <taxon>Fabales</taxon>
        <taxon>Fabaceae</taxon>
        <taxon>Papilionoideae</taxon>
        <taxon>50 kb inversion clade</taxon>
        <taxon>NPAAA clade</taxon>
        <taxon>Hologalegina</taxon>
        <taxon>IRL clade</taxon>
        <taxon>Trifolieae</taxon>
        <taxon>Medicago</taxon>
    </lineage>
</organism>
<dbReference type="EMBL" id="M91076">
    <property type="protein sequence ID" value="AAB41523.1"/>
    <property type="molecule type" value="mRNA"/>
</dbReference>
<dbReference type="EMBL" id="M91074">
    <property type="protein sequence ID" value="AAB41521.1"/>
    <property type="molecule type" value="mRNA"/>
</dbReference>
<dbReference type="EMBL" id="M91075">
    <property type="protein sequence ID" value="AAB41522.1"/>
    <property type="molecule type" value="mRNA"/>
</dbReference>
<dbReference type="PIR" id="JQ2290">
    <property type="entry name" value="JQ2290"/>
</dbReference>
<dbReference type="PIR" id="JQ2291">
    <property type="entry name" value="JQ2291"/>
</dbReference>
<dbReference type="GO" id="GO:0009877">
    <property type="term" value="P:nodulation"/>
    <property type="evidence" value="ECO:0007669"/>
    <property type="project" value="UniProtKB-KW"/>
</dbReference>
<name>NO10_MEDSA</name>
<gene>
    <name type="primary">ENOD10</name>
</gene>
<proteinExistence type="evidence at transcript level"/>
<accession>Q40357</accession>
<accession>Q40355</accession>
<accession>Q40356</accession>
<keyword id="KW-0536">Nodulation</keyword>
<keyword id="KW-0677">Repeat</keyword>
<keyword id="KW-0732">Signal</keyword>
<sequence>MTCTLKSPPKMASFFLSSLVLMFIAALILLPQGLAAYKLTPTYKPPDSELPPYRNFVPPFALNPVYNAPIYKTPNSPPIYNPPIYEAPPTYKPSKKRLPPPFQKLPPFYKQAPPSQKLPRVN</sequence>
<evidence type="ECO:0000255" key="1"/>
<evidence type="ECO:0000256" key="2">
    <source>
        <dbReference type="SAM" id="MobiDB-lite"/>
    </source>
</evidence>
<evidence type="ECO:0000269" key="3">
    <source>
    </source>
</evidence>
<protein>
    <recommendedName>
        <fullName>Early nodulin-10</fullName>
    </recommendedName>
</protein>